<keyword id="KW-1185">Reference proteome</keyword>
<dbReference type="EMBL" id="AE005174">
    <property type="protein sequence ID" value="AAG57529.1"/>
    <property type="molecule type" value="Genomic_DNA"/>
</dbReference>
<dbReference type="EMBL" id="BA000007">
    <property type="status" value="NOT_ANNOTATED_CDS"/>
    <property type="molecule type" value="Genomic_DNA"/>
</dbReference>
<dbReference type="PIR" id="E85883">
    <property type="entry name" value="E85883"/>
</dbReference>
<dbReference type="RefSeq" id="WP_000410201.1">
    <property type="nucleotide sequence ID" value="NZ_VOAI01000001.1"/>
</dbReference>
<dbReference type="SMR" id="P0AD41"/>
<dbReference type="STRING" id="155864.Z3676"/>
<dbReference type="KEGG" id="ece:Z3676"/>
<dbReference type="PATRIC" id="fig|83334.175.peg.6067"/>
<dbReference type="eggNOG" id="COG3530">
    <property type="taxonomic scope" value="Bacteria"/>
</dbReference>
<dbReference type="OMA" id="PGHYLNW"/>
<dbReference type="Proteomes" id="UP000000558">
    <property type="component" value="Chromosome"/>
</dbReference>
<dbReference type="Proteomes" id="UP000002519">
    <property type="component" value="Chromosome"/>
</dbReference>
<dbReference type="InterPro" id="IPR024530">
    <property type="entry name" value="QSregVF_b"/>
</dbReference>
<dbReference type="Pfam" id="PF12843">
    <property type="entry name" value="QSregVF_b"/>
    <property type="match status" value="1"/>
</dbReference>
<sequence length="72" mass="8415">MEKEQLIEIANTIMPFGKYKGRRLIDLPEEYLLWFARKDEFPAGKLGELMQITLLIKTEGLTQLVQPLKRPL</sequence>
<reference key="1">
    <citation type="journal article" date="2001" name="Nature">
        <title>Genome sequence of enterohaemorrhagic Escherichia coli O157:H7.</title>
        <authorList>
            <person name="Perna N.T."/>
            <person name="Plunkett G. III"/>
            <person name="Burland V."/>
            <person name="Mau B."/>
            <person name="Glasner J.D."/>
            <person name="Rose D.J."/>
            <person name="Mayhew G.F."/>
            <person name="Evans P.S."/>
            <person name="Gregor J."/>
            <person name="Kirkpatrick H.A."/>
            <person name="Posfai G."/>
            <person name="Hackett J."/>
            <person name="Klink S."/>
            <person name="Boutin A."/>
            <person name="Shao Y."/>
            <person name="Miller L."/>
            <person name="Grotbeck E.J."/>
            <person name="Davis N.W."/>
            <person name="Lim A."/>
            <person name="Dimalanta E.T."/>
            <person name="Potamousis K."/>
            <person name="Apodaca J."/>
            <person name="Anantharaman T.S."/>
            <person name="Lin J."/>
            <person name="Yen G."/>
            <person name="Schwartz D.C."/>
            <person name="Welch R.A."/>
            <person name="Blattner F.R."/>
        </authorList>
    </citation>
    <scope>NUCLEOTIDE SEQUENCE [LARGE SCALE GENOMIC DNA]</scope>
    <source>
        <strain>O157:H7 / EDL933 / ATCC 700927 / EHEC</strain>
    </source>
</reference>
<reference key="2">
    <citation type="journal article" date="2001" name="DNA Res.">
        <title>Complete genome sequence of enterohemorrhagic Escherichia coli O157:H7 and genomic comparison with a laboratory strain K-12.</title>
        <authorList>
            <person name="Hayashi T."/>
            <person name="Makino K."/>
            <person name="Ohnishi M."/>
            <person name="Kurokawa K."/>
            <person name="Ishii K."/>
            <person name="Yokoyama K."/>
            <person name="Han C.-G."/>
            <person name="Ohtsubo E."/>
            <person name="Nakayama K."/>
            <person name="Murata T."/>
            <person name="Tanaka M."/>
            <person name="Tobe T."/>
            <person name="Iida T."/>
            <person name="Takami H."/>
            <person name="Honda T."/>
            <person name="Sasakawa C."/>
            <person name="Ogasawara N."/>
            <person name="Yasunaga T."/>
            <person name="Kuhara S."/>
            <person name="Shiba T."/>
            <person name="Hattori M."/>
            <person name="Shinagawa H."/>
        </authorList>
    </citation>
    <scope>NUCLEOTIDE SEQUENCE [LARGE SCALE GENOMIC DNA]</scope>
    <source>
        <strain>O157:H7 / Sakai / RIMD 0509952 / EHEC</strain>
    </source>
</reference>
<protein>
    <recommendedName>
        <fullName>Uncharacterized protein YpeB</fullName>
    </recommendedName>
</protein>
<gene>
    <name type="primary">ypeB</name>
    <name type="ordered locus">Z3676</name>
    <name type="ordered locus">ECs3282.1</name>
</gene>
<feature type="chain" id="PRO_0000169228" description="Uncharacterized protein YpeB">
    <location>
        <begin position="1"/>
        <end position="72"/>
    </location>
</feature>
<proteinExistence type="predicted"/>
<name>YPEB_ECO57</name>
<accession>P0AD41</accession>
<accession>P56604</accession>
<organism>
    <name type="scientific">Escherichia coli O157:H7</name>
    <dbReference type="NCBI Taxonomy" id="83334"/>
    <lineage>
        <taxon>Bacteria</taxon>
        <taxon>Pseudomonadati</taxon>
        <taxon>Pseudomonadota</taxon>
        <taxon>Gammaproteobacteria</taxon>
        <taxon>Enterobacterales</taxon>
        <taxon>Enterobacteriaceae</taxon>
        <taxon>Escherichia</taxon>
    </lineage>
</organism>